<protein>
    <recommendedName>
        <fullName>Neurotoxin LmNaTx1</fullName>
    </recommendedName>
</protein>
<dbReference type="EMBL" id="EU159276">
    <property type="protein sequence ID" value="ABX76749.1"/>
    <property type="molecule type" value="mRNA"/>
</dbReference>
<dbReference type="SMR" id="D9U297"/>
<dbReference type="GO" id="GO:0005576">
    <property type="term" value="C:extracellular region"/>
    <property type="evidence" value="ECO:0007669"/>
    <property type="project" value="UniProtKB-SubCell"/>
</dbReference>
<dbReference type="GO" id="GO:0019871">
    <property type="term" value="F:sodium channel inhibitor activity"/>
    <property type="evidence" value="ECO:0007669"/>
    <property type="project" value="InterPro"/>
</dbReference>
<dbReference type="GO" id="GO:0090729">
    <property type="term" value="F:toxin activity"/>
    <property type="evidence" value="ECO:0007669"/>
    <property type="project" value="UniProtKB-KW"/>
</dbReference>
<dbReference type="GO" id="GO:0006952">
    <property type="term" value="P:defense response"/>
    <property type="evidence" value="ECO:0007669"/>
    <property type="project" value="InterPro"/>
</dbReference>
<dbReference type="CDD" id="cd23106">
    <property type="entry name" value="neurotoxins_LC_scorpion"/>
    <property type="match status" value="1"/>
</dbReference>
<dbReference type="FunFam" id="3.30.30.10:FF:000002">
    <property type="entry name" value="Alpha-like toxin BmK-M1"/>
    <property type="match status" value="1"/>
</dbReference>
<dbReference type="Gene3D" id="3.30.30.10">
    <property type="entry name" value="Knottin, scorpion toxin-like"/>
    <property type="match status" value="1"/>
</dbReference>
<dbReference type="InterPro" id="IPR044062">
    <property type="entry name" value="LCN-type_CS_alpha_beta_dom"/>
</dbReference>
<dbReference type="InterPro" id="IPR003614">
    <property type="entry name" value="Scorpion_toxin-like"/>
</dbReference>
<dbReference type="InterPro" id="IPR036574">
    <property type="entry name" value="Scorpion_toxin-like_sf"/>
</dbReference>
<dbReference type="InterPro" id="IPR018218">
    <property type="entry name" value="Scorpion_toxinL"/>
</dbReference>
<dbReference type="InterPro" id="IPR002061">
    <property type="entry name" value="Scorpion_toxinL/defensin"/>
</dbReference>
<dbReference type="Pfam" id="PF00537">
    <property type="entry name" value="Toxin_3"/>
    <property type="match status" value="1"/>
</dbReference>
<dbReference type="PRINTS" id="PR00285">
    <property type="entry name" value="SCORPNTOXIN"/>
</dbReference>
<dbReference type="SMART" id="SM00505">
    <property type="entry name" value="Knot1"/>
    <property type="match status" value="1"/>
</dbReference>
<dbReference type="SUPFAM" id="SSF57095">
    <property type="entry name" value="Scorpion toxin-like"/>
    <property type="match status" value="1"/>
</dbReference>
<dbReference type="PROSITE" id="PS51863">
    <property type="entry name" value="LCN_CSAB"/>
    <property type="match status" value="1"/>
</dbReference>
<comment type="function">
    <text evidence="1">Binds voltage-independently at site-4 of sodium channels (Nav) and shift the voltage of activation toward more negative potentials thereby affecting sodium channel activation and promoting spontaneous and repetitive firing.</text>
</comment>
<comment type="subcellular location">
    <subcellularLocation>
        <location evidence="1">Secreted</location>
    </subcellularLocation>
</comment>
<comment type="tissue specificity">
    <text>Expressed by the venom gland.</text>
</comment>
<comment type="domain">
    <text evidence="4">Has the structural arrangement of an alpha-helix connected to antiparallel beta-sheets by disulfide bonds (CS-alpha/beta).</text>
</comment>
<comment type="similarity">
    <text evidence="4">Belongs to the long (4 C-C) scorpion toxin superfamily. Sodium channel inhibitor family. Beta subfamily.</text>
</comment>
<sequence length="86" mass="9497">MKILIIFVIAITVVGVQSKDGYPIYSTGKSKGCKIECVINNKYCDKECTLKGGSSGYCYFWKLACYCEGLPDSVAVWTYAENTCGR</sequence>
<feature type="signal peptide" evidence="2">
    <location>
        <begin position="1"/>
        <end position="18"/>
    </location>
</feature>
<feature type="chain" id="PRO_0000403823" description="Neurotoxin LmNaTx1">
    <location>
        <begin position="19"/>
        <end position="84"/>
    </location>
</feature>
<feature type="domain" description="LCN-type CS-alpha/beta" evidence="3">
    <location>
        <begin position="19"/>
        <end position="85"/>
    </location>
</feature>
<feature type="modified residue" description="Cysteine amide" evidence="1">
    <location>
        <position position="84"/>
    </location>
</feature>
<feature type="disulfide bond" evidence="3">
    <location>
        <begin position="33"/>
        <end position="84"/>
    </location>
</feature>
<feature type="disulfide bond" evidence="3">
    <location>
        <begin position="37"/>
        <end position="58"/>
    </location>
</feature>
<feature type="disulfide bond" evidence="3">
    <location>
        <begin position="44"/>
        <end position="65"/>
    </location>
</feature>
<feature type="disulfide bond" evidence="3">
    <location>
        <begin position="48"/>
        <end position="67"/>
    </location>
</feature>
<evidence type="ECO:0000250" key="1"/>
<evidence type="ECO:0000255" key="2"/>
<evidence type="ECO:0000255" key="3">
    <source>
        <dbReference type="PROSITE-ProRule" id="PRU01210"/>
    </source>
</evidence>
<evidence type="ECO:0000305" key="4"/>
<organism>
    <name type="scientific">Lychas mucronatus</name>
    <name type="common">Chinese swimming scorpion</name>
    <dbReference type="NCBI Taxonomy" id="172552"/>
    <lineage>
        <taxon>Eukaryota</taxon>
        <taxon>Metazoa</taxon>
        <taxon>Ecdysozoa</taxon>
        <taxon>Arthropoda</taxon>
        <taxon>Chelicerata</taxon>
        <taxon>Arachnida</taxon>
        <taxon>Scorpiones</taxon>
        <taxon>Buthida</taxon>
        <taxon>Buthoidea</taxon>
        <taxon>Buthidae</taxon>
        <taxon>Lychas</taxon>
    </lineage>
</organism>
<accession>D9U297</accession>
<name>SNA1_LYCMC</name>
<reference key="1">
    <citation type="journal article" date="2010" name="BMC Genomics">
        <title>Comparative venom gland transcriptome analysis of the scorpion Lychas mucronatus reveals intraspecific toxic gene diversity and new venomous components.</title>
        <authorList>
            <person name="Zhao R."/>
            <person name="Ma Y."/>
            <person name="He Y."/>
            <person name="Di Z."/>
            <person name="Wu Y.-L."/>
            <person name="Cao Z.-J."/>
            <person name="Li W.-X."/>
        </authorList>
    </citation>
    <scope>NUCLEOTIDE SEQUENCE [MRNA]</scope>
    <source>
        <strain>Hainan</strain>
        <tissue>Venom gland</tissue>
    </source>
</reference>
<proteinExistence type="evidence at transcript level"/>
<keyword id="KW-0027">Amidation</keyword>
<keyword id="KW-1015">Disulfide bond</keyword>
<keyword id="KW-0872">Ion channel impairing toxin</keyword>
<keyword id="KW-0528">Neurotoxin</keyword>
<keyword id="KW-0964">Secreted</keyword>
<keyword id="KW-0732">Signal</keyword>
<keyword id="KW-0800">Toxin</keyword>
<keyword id="KW-0738">Voltage-gated sodium channel impairing toxin</keyword>